<dbReference type="EC" id="2.4.1.207"/>
<dbReference type="EMBL" id="AL133315">
    <property type="protein sequence ID" value="CAB62347.1"/>
    <property type="status" value="ALT_INIT"/>
    <property type="molecule type" value="Genomic_DNA"/>
</dbReference>
<dbReference type="EMBL" id="CP002686">
    <property type="protein sequence ID" value="AEE78432.1"/>
    <property type="molecule type" value="Genomic_DNA"/>
</dbReference>
<dbReference type="EMBL" id="BT025721">
    <property type="protein sequence ID" value="ABF82624.1"/>
    <property type="molecule type" value="mRNA"/>
</dbReference>
<dbReference type="EMBL" id="AY088649">
    <property type="protein sequence ID" value="AAM66971.1"/>
    <property type="status" value="ALT_INIT"/>
    <property type="molecule type" value="mRNA"/>
</dbReference>
<dbReference type="PIR" id="T46202">
    <property type="entry name" value="T46202"/>
</dbReference>
<dbReference type="RefSeq" id="NP_566910.1">
    <molecule id="Q9SMP1-1"/>
    <property type="nucleotide sequence ID" value="NM_114717.3"/>
</dbReference>
<dbReference type="SMR" id="Q9SMP1"/>
<dbReference type="STRING" id="3702.Q9SMP1"/>
<dbReference type="CAZy" id="GH16">
    <property type="family name" value="Glycoside Hydrolase Family 16"/>
</dbReference>
<dbReference type="GlyCosmos" id="Q9SMP1">
    <property type="glycosylation" value="2 sites, No reported glycans"/>
</dbReference>
<dbReference type="GlyGen" id="Q9SMP1">
    <property type="glycosylation" value="2 sites"/>
</dbReference>
<dbReference type="PaxDb" id="3702-AT3G48580.1"/>
<dbReference type="ProteomicsDB" id="242580">
    <molecule id="Q9SMP1-1"/>
</dbReference>
<dbReference type="EnsemblPlants" id="AT3G48580.1">
    <molecule id="Q9SMP1-1"/>
    <property type="protein sequence ID" value="AT3G48580.1"/>
    <property type="gene ID" value="AT3G48580"/>
</dbReference>
<dbReference type="GeneID" id="824018"/>
<dbReference type="Gramene" id="AT3G48580.1">
    <molecule id="Q9SMP1-1"/>
    <property type="protein sequence ID" value="AT3G48580.1"/>
    <property type="gene ID" value="AT3G48580"/>
</dbReference>
<dbReference type="KEGG" id="ath:AT3G48580"/>
<dbReference type="Araport" id="AT3G48580"/>
<dbReference type="TAIR" id="AT3G48580">
    <property type="gene designation" value="XTH11"/>
</dbReference>
<dbReference type="eggNOG" id="KOG0017">
    <property type="taxonomic scope" value="Eukaryota"/>
</dbReference>
<dbReference type="HOGENOM" id="CLU_048041_1_1_1"/>
<dbReference type="InParanoid" id="Q9SMP1"/>
<dbReference type="OMA" id="EMPYTAE"/>
<dbReference type="BioCyc" id="ARA:AT3G48580-MONOMER"/>
<dbReference type="PRO" id="PR:Q9SMP1"/>
<dbReference type="Proteomes" id="UP000006548">
    <property type="component" value="Chromosome 3"/>
</dbReference>
<dbReference type="ExpressionAtlas" id="Q9SMP1">
    <property type="expression patterns" value="baseline and differential"/>
</dbReference>
<dbReference type="GO" id="GO:0048046">
    <property type="term" value="C:apoplast"/>
    <property type="evidence" value="ECO:0007669"/>
    <property type="project" value="UniProtKB-SubCell"/>
</dbReference>
<dbReference type="GO" id="GO:0004553">
    <property type="term" value="F:hydrolase activity, hydrolyzing O-glycosyl compounds"/>
    <property type="evidence" value="ECO:0007669"/>
    <property type="project" value="InterPro"/>
</dbReference>
<dbReference type="GO" id="GO:0030247">
    <property type="term" value="F:polysaccharide binding"/>
    <property type="evidence" value="ECO:0000250"/>
    <property type="project" value="UniProtKB"/>
</dbReference>
<dbReference type="GO" id="GO:0016762">
    <property type="term" value="F:xyloglucan:xyloglucosyl transferase activity"/>
    <property type="evidence" value="ECO:0007669"/>
    <property type="project" value="UniProtKB-EC"/>
</dbReference>
<dbReference type="GO" id="GO:0042546">
    <property type="term" value="P:cell wall biogenesis"/>
    <property type="evidence" value="ECO:0007669"/>
    <property type="project" value="InterPro"/>
</dbReference>
<dbReference type="GO" id="GO:0071555">
    <property type="term" value="P:cell wall organization"/>
    <property type="evidence" value="ECO:0007669"/>
    <property type="project" value="UniProtKB-KW"/>
</dbReference>
<dbReference type="GO" id="GO:0010411">
    <property type="term" value="P:xyloglucan metabolic process"/>
    <property type="evidence" value="ECO:0007669"/>
    <property type="project" value="InterPro"/>
</dbReference>
<dbReference type="Gene3D" id="2.60.120.200">
    <property type="match status" value="1"/>
</dbReference>
<dbReference type="InterPro" id="IPR044791">
    <property type="entry name" value="Beta-glucanase/XTH"/>
</dbReference>
<dbReference type="InterPro" id="IPR008264">
    <property type="entry name" value="Beta_glucanase"/>
</dbReference>
<dbReference type="InterPro" id="IPR013320">
    <property type="entry name" value="ConA-like_dom_sf"/>
</dbReference>
<dbReference type="InterPro" id="IPR000757">
    <property type="entry name" value="GH16"/>
</dbReference>
<dbReference type="InterPro" id="IPR010713">
    <property type="entry name" value="XET_C"/>
</dbReference>
<dbReference type="InterPro" id="IPR016455">
    <property type="entry name" value="XTH"/>
</dbReference>
<dbReference type="PANTHER" id="PTHR31062">
    <property type="entry name" value="XYLOGLUCAN ENDOTRANSGLUCOSYLASE/HYDROLASE PROTEIN 8-RELATED"/>
    <property type="match status" value="1"/>
</dbReference>
<dbReference type="Pfam" id="PF00722">
    <property type="entry name" value="Glyco_hydro_16"/>
    <property type="match status" value="1"/>
</dbReference>
<dbReference type="Pfam" id="PF06955">
    <property type="entry name" value="XET_C"/>
    <property type="match status" value="1"/>
</dbReference>
<dbReference type="PIRSF" id="PIRSF005604">
    <property type="entry name" value="XET"/>
    <property type="match status" value="1"/>
</dbReference>
<dbReference type="PRINTS" id="PR00737">
    <property type="entry name" value="GLHYDRLASE16"/>
</dbReference>
<dbReference type="SUPFAM" id="SSF49899">
    <property type="entry name" value="Concanavalin A-like lectins/glucanases"/>
    <property type="match status" value="1"/>
</dbReference>
<dbReference type="PROSITE" id="PS51762">
    <property type="entry name" value="GH16_2"/>
    <property type="match status" value="1"/>
</dbReference>
<organism>
    <name type="scientific">Arabidopsis thaliana</name>
    <name type="common">Mouse-ear cress</name>
    <dbReference type="NCBI Taxonomy" id="3702"/>
    <lineage>
        <taxon>Eukaryota</taxon>
        <taxon>Viridiplantae</taxon>
        <taxon>Streptophyta</taxon>
        <taxon>Embryophyta</taxon>
        <taxon>Tracheophyta</taxon>
        <taxon>Spermatophyta</taxon>
        <taxon>Magnoliopsida</taxon>
        <taxon>eudicotyledons</taxon>
        <taxon>Gunneridae</taxon>
        <taxon>Pentapetalae</taxon>
        <taxon>rosids</taxon>
        <taxon>malvids</taxon>
        <taxon>Brassicales</taxon>
        <taxon>Brassicaceae</taxon>
        <taxon>Camelineae</taxon>
        <taxon>Arabidopsis</taxon>
    </lineage>
</organism>
<comment type="function">
    <text evidence="1">May catalyze xyloglucan endohydrolysis (XEH) and/or endotransglycosylation (XET). Cleaves and religates xyloglucan polymers, an essential constituent of the primary cell wall, and thereby participates in cell wall construction of growing tissues (By similarity).</text>
</comment>
<comment type="catalytic activity">
    <reaction>
        <text>breaks a beta-(1-&gt;4) bond in the backbone of a xyloglucan and transfers the xyloglucanyl segment on to O-4 of the non-reducing terminal glucose residue of an acceptor, which can be a xyloglucan or an oligosaccharide of xyloglucan.</text>
        <dbReference type="EC" id="2.4.1.207"/>
    </reaction>
</comment>
<comment type="subcellular location">
    <subcellularLocation>
        <location evidence="5">Secreted</location>
        <location evidence="5">Cell wall</location>
    </subcellularLocation>
    <subcellularLocation>
        <location evidence="5">Secreted</location>
        <location evidence="5">Extracellular space</location>
        <location evidence="5">Apoplast</location>
    </subcellularLocation>
</comment>
<comment type="alternative products">
    <event type="alternative splicing"/>
    <isoform>
        <id>Q9SMP1-1</id>
        <name>1</name>
        <sequence type="displayed"/>
    </isoform>
    <text>A number of isoforms are produced. According to EST sequences.</text>
</comment>
<comment type="PTM">
    <text evidence="1">Contains at least one intrachain disulfide bond essential for its enzymatic activity.</text>
</comment>
<comment type="similarity">
    <text evidence="5">Belongs to the glycosyl hydrolase 16 family. XTH group 1 subfamily.</text>
</comment>
<comment type="caution">
    <text evidence="5">In contrast to other xyloglucan endotransglucosylase proteins, the catalytic motif is atypical and lacks the proton donor site. It therefore may not be functional in vivo.</text>
</comment>
<comment type="sequence caution" evidence="5">
    <conflict type="erroneous initiation">
        <sequence resource="EMBL-CDS" id="AAM66971"/>
    </conflict>
    <text>Truncated N-terminus.</text>
</comment>
<comment type="sequence caution" evidence="5">
    <conflict type="erroneous initiation">
        <sequence resource="EMBL-CDS" id="CAB62347"/>
    </conflict>
    <text>Truncated N-terminus.</text>
</comment>
<feature type="signal peptide" evidence="3">
    <location>
        <begin position="1"/>
        <end position="24"/>
    </location>
</feature>
<feature type="chain" id="PRO_0000011811" description="Probable xyloglucan endotransglucosylase/hydrolase protein 11">
    <location>
        <begin position="25"/>
        <end position="277"/>
    </location>
</feature>
<feature type="domain" description="GH16" evidence="4">
    <location>
        <begin position="32"/>
        <end position="209"/>
    </location>
</feature>
<feature type="active site" description="Nucleophile" evidence="2">
    <location>
        <position position="107"/>
    </location>
</feature>
<feature type="binding site" evidence="2">
    <location>
        <begin position="123"/>
        <end position="125"/>
    </location>
    <ligand>
        <name>xyloglucan</name>
        <dbReference type="ChEBI" id="CHEBI:18233"/>
    </ligand>
</feature>
<feature type="binding site" evidence="2">
    <location>
        <begin position="133"/>
        <end position="135"/>
    </location>
    <ligand>
        <name>xyloglucan</name>
        <dbReference type="ChEBI" id="CHEBI:18233"/>
    </ligand>
</feature>
<feature type="binding site" evidence="2">
    <location>
        <position position="265"/>
    </location>
    <ligand>
        <name>xyloglucan</name>
        <dbReference type="ChEBI" id="CHEBI:18233"/>
    </ligand>
</feature>
<feature type="glycosylation site" description="N-linked (GlcNAc...) asparagine" evidence="3">
    <location>
        <position position="50"/>
    </location>
</feature>
<feature type="glycosylation site" description="N-linked (GlcNAc...) asparagine" evidence="3">
    <location>
        <position position="194"/>
    </location>
</feature>
<feature type="disulfide bond" evidence="2">
    <location>
        <begin position="217"/>
        <end position="227"/>
    </location>
</feature>
<feature type="disulfide bond" evidence="2">
    <location>
        <begin position="260"/>
        <end position="273"/>
    </location>
</feature>
<sequence length="277" mass="31939">MRGSDQKILLMVMVVVAVVAAAQGQEETTGFVTWGNNYYQTWGHQALVINKTSELQLTLDKNSGSGFESQLIYGSGYFNVRIKAPQTTSTGVITSFYLISRSSRHDELCFQILGKNGPPYLLNTNMYLYGEGGKDQRFRLWFDPTKDYHSYSFLWNPNQLVFYVDDTPIRVYSKNPDVYYPSVQTMFLMGSVQNGSIIDPKQMPYIAKFQASKIEGCKTEFMGIDKCTDPKFWWNRKQLSSKEKTLYLNARKTYLDYDYCSDRQRYPKVPQECGSYT</sequence>
<accession>Q9SMP1</accession>
<accession>Q1ECL3</accession>
<proteinExistence type="evidence at transcript level"/>
<evidence type="ECO:0000250" key="1"/>
<evidence type="ECO:0000250" key="2">
    <source>
        <dbReference type="UniProtKB" id="Q8GZD5"/>
    </source>
</evidence>
<evidence type="ECO:0000255" key="3"/>
<evidence type="ECO:0000255" key="4">
    <source>
        <dbReference type="PROSITE-ProRule" id="PRU01098"/>
    </source>
</evidence>
<evidence type="ECO:0000305" key="5"/>
<reference key="1">
    <citation type="journal article" date="2000" name="Nature">
        <title>Sequence and analysis of chromosome 3 of the plant Arabidopsis thaliana.</title>
        <authorList>
            <person name="Salanoubat M."/>
            <person name="Lemcke K."/>
            <person name="Rieger M."/>
            <person name="Ansorge W."/>
            <person name="Unseld M."/>
            <person name="Fartmann B."/>
            <person name="Valle G."/>
            <person name="Bloecker H."/>
            <person name="Perez-Alonso M."/>
            <person name="Obermaier B."/>
            <person name="Delseny M."/>
            <person name="Boutry M."/>
            <person name="Grivell L.A."/>
            <person name="Mache R."/>
            <person name="Puigdomenech P."/>
            <person name="De Simone V."/>
            <person name="Choisne N."/>
            <person name="Artiguenave F."/>
            <person name="Robert C."/>
            <person name="Brottier P."/>
            <person name="Wincker P."/>
            <person name="Cattolico L."/>
            <person name="Weissenbach J."/>
            <person name="Saurin W."/>
            <person name="Quetier F."/>
            <person name="Schaefer M."/>
            <person name="Mueller-Auer S."/>
            <person name="Gabel C."/>
            <person name="Fuchs M."/>
            <person name="Benes V."/>
            <person name="Wurmbach E."/>
            <person name="Drzonek H."/>
            <person name="Erfle H."/>
            <person name="Jordan N."/>
            <person name="Bangert S."/>
            <person name="Wiedelmann R."/>
            <person name="Kranz H."/>
            <person name="Voss H."/>
            <person name="Holland R."/>
            <person name="Brandt P."/>
            <person name="Nyakatura G."/>
            <person name="Vezzi A."/>
            <person name="D'Angelo M."/>
            <person name="Pallavicini A."/>
            <person name="Toppo S."/>
            <person name="Simionati B."/>
            <person name="Conrad A."/>
            <person name="Hornischer K."/>
            <person name="Kauer G."/>
            <person name="Loehnert T.-H."/>
            <person name="Nordsiek G."/>
            <person name="Reichelt J."/>
            <person name="Scharfe M."/>
            <person name="Schoen O."/>
            <person name="Bargues M."/>
            <person name="Terol J."/>
            <person name="Climent J."/>
            <person name="Navarro P."/>
            <person name="Collado C."/>
            <person name="Perez-Perez A."/>
            <person name="Ottenwaelder B."/>
            <person name="Duchemin D."/>
            <person name="Cooke R."/>
            <person name="Laudie M."/>
            <person name="Berger-Llauro C."/>
            <person name="Purnelle B."/>
            <person name="Masuy D."/>
            <person name="de Haan M."/>
            <person name="Maarse A.C."/>
            <person name="Alcaraz J.-P."/>
            <person name="Cottet A."/>
            <person name="Casacuberta E."/>
            <person name="Monfort A."/>
            <person name="Argiriou A."/>
            <person name="Flores M."/>
            <person name="Liguori R."/>
            <person name="Vitale D."/>
            <person name="Mannhaupt G."/>
            <person name="Haase D."/>
            <person name="Schoof H."/>
            <person name="Rudd S."/>
            <person name="Zaccaria P."/>
            <person name="Mewes H.-W."/>
            <person name="Mayer K.F.X."/>
            <person name="Kaul S."/>
            <person name="Town C.D."/>
            <person name="Koo H.L."/>
            <person name="Tallon L.J."/>
            <person name="Jenkins J."/>
            <person name="Rooney T."/>
            <person name="Rizzo M."/>
            <person name="Walts A."/>
            <person name="Utterback T."/>
            <person name="Fujii C.Y."/>
            <person name="Shea T.P."/>
            <person name="Creasy T.H."/>
            <person name="Haas B."/>
            <person name="Maiti R."/>
            <person name="Wu D."/>
            <person name="Peterson J."/>
            <person name="Van Aken S."/>
            <person name="Pai G."/>
            <person name="Militscher J."/>
            <person name="Sellers P."/>
            <person name="Gill J.E."/>
            <person name="Feldblyum T.V."/>
            <person name="Preuss D."/>
            <person name="Lin X."/>
            <person name="Nierman W.C."/>
            <person name="Salzberg S.L."/>
            <person name="White O."/>
            <person name="Venter J.C."/>
            <person name="Fraser C.M."/>
            <person name="Kaneko T."/>
            <person name="Nakamura Y."/>
            <person name="Sato S."/>
            <person name="Kato T."/>
            <person name="Asamizu E."/>
            <person name="Sasamoto S."/>
            <person name="Kimura T."/>
            <person name="Idesawa K."/>
            <person name="Kawashima K."/>
            <person name="Kishida Y."/>
            <person name="Kiyokawa C."/>
            <person name="Kohara M."/>
            <person name="Matsumoto M."/>
            <person name="Matsuno A."/>
            <person name="Muraki A."/>
            <person name="Nakayama S."/>
            <person name="Nakazaki N."/>
            <person name="Shinpo S."/>
            <person name="Takeuchi C."/>
            <person name="Wada T."/>
            <person name="Watanabe A."/>
            <person name="Yamada M."/>
            <person name="Yasuda M."/>
            <person name="Tabata S."/>
        </authorList>
    </citation>
    <scope>NUCLEOTIDE SEQUENCE [LARGE SCALE GENOMIC DNA]</scope>
    <source>
        <strain>cv. Columbia</strain>
    </source>
</reference>
<reference key="2">
    <citation type="journal article" date="2017" name="Plant J.">
        <title>Araport11: a complete reannotation of the Arabidopsis thaliana reference genome.</title>
        <authorList>
            <person name="Cheng C.Y."/>
            <person name="Krishnakumar V."/>
            <person name="Chan A.P."/>
            <person name="Thibaud-Nissen F."/>
            <person name="Schobel S."/>
            <person name="Town C.D."/>
        </authorList>
    </citation>
    <scope>GENOME REANNOTATION</scope>
    <source>
        <strain>cv. Columbia</strain>
    </source>
</reference>
<reference key="3">
    <citation type="submission" date="2006-06" db="EMBL/GenBank/DDBJ databases">
        <title>Arabidopsis ORF Clones.</title>
        <authorList>
            <person name="Quinitio C."/>
            <person name="Chen H."/>
            <person name="Kim C.J."/>
            <person name="Shinn P."/>
            <person name="Ecker J.R."/>
        </authorList>
    </citation>
    <scope>NUCLEOTIDE SEQUENCE [LARGE SCALE MRNA]</scope>
    <source>
        <strain>cv. Columbia</strain>
    </source>
</reference>
<reference key="4">
    <citation type="submission" date="2002-03" db="EMBL/GenBank/DDBJ databases">
        <title>Full-length cDNA from Arabidopsis thaliana.</title>
        <authorList>
            <person name="Brover V.V."/>
            <person name="Troukhan M.E."/>
            <person name="Alexandrov N.A."/>
            <person name="Lu Y.-P."/>
            <person name="Flavell R.B."/>
            <person name="Feldmann K.A."/>
        </authorList>
    </citation>
    <scope>NUCLEOTIDE SEQUENCE [LARGE SCALE MRNA]</scope>
</reference>
<reference key="5">
    <citation type="journal article" date="2002" name="Plant Cell Physiol.">
        <title>The XTH family of enzymes involved in xyloglucan endotransglucosylation and endohydrolysis: current perspectives and a new unifying nomenclature.</title>
        <authorList>
            <person name="Rose J.K.C."/>
            <person name="Braam J."/>
            <person name="Fry S.C."/>
            <person name="Nishitani K."/>
        </authorList>
    </citation>
    <scope>NOMENCLATURE</scope>
</reference>
<name>XTH11_ARATH</name>
<gene>
    <name type="primary">XTH11</name>
    <name type="ordered locus">At3g48580</name>
    <name type="ORF">T8P19.90</name>
</gene>
<keyword id="KW-0025">Alternative splicing</keyword>
<keyword id="KW-0052">Apoplast</keyword>
<keyword id="KW-0134">Cell wall</keyword>
<keyword id="KW-0961">Cell wall biogenesis/degradation</keyword>
<keyword id="KW-1015">Disulfide bond</keyword>
<keyword id="KW-0325">Glycoprotein</keyword>
<keyword id="KW-0326">Glycosidase</keyword>
<keyword id="KW-0378">Hydrolase</keyword>
<keyword id="KW-1185">Reference proteome</keyword>
<keyword id="KW-0964">Secreted</keyword>
<keyword id="KW-0732">Signal</keyword>
<keyword id="KW-0808">Transferase</keyword>
<protein>
    <recommendedName>
        <fullName>Probable xyloglucan endotransglucosylase/hydrolase protein 11</fullName>
        <shortName>At-XTH11</shortName>
        <shortName>XTH-11</shortName>
        <ecNumber>2.4.1.207</ecNumber>
    </recommendedName>
</protein>